<keyword id="KW-0884">PQQ biosynthesis</keyword>
<keyword id="KW-1185">Reference proteome</keyword>
<proteinExistence type="inferred from homology"/>
<organism>
    <name type="scientific">Rhodopseudomonas palustris (strain HaA2)</name>
    <dbReference type="NCBI Taxonomy" id="316058"/>
    <lineage>
        <taxon>Bacteria</taxon>
        <taxon>Pseudomonadati</taxon>
        <taxon>Pseudomonadota</taxon>
        <taxon>Alphaproteobacteria</taxon>
        <taxon>Hyphomicrobiales</taxon>
        <taxon>Nitrobacteraceae</taxon>
        <taxon>Rhodopseudomonas</taxon>
    </lineage>
</organism>
<comment type="function">
    <text evidence="1">Functions as a PqqA binding protein and presents PqqA to PqqE, in the pyrroloquinoline quinone (PQQ) biosynthetic pathway.</text>
</comment>
<comment type="pathway">
    <text evidence="1">Cofactor biosynthesis; pyrroloquinoline quinone biosynthesis.</text>
</comment>
<comment type="subunit">
    <text evidence="1">Monomer. Interacts with PqqE.</text>
</comment>
<comment type="similarity">
    <text evidence="1">Belongs to the PqqD family.</text>
</comment>
<feature type="chain" id="PRO_1000061691" description="PqqA binding protein">
    <location>
        <begin position="1"/>
        <end position="102"/>
    </location>
</feature>
<name>PQQD_RHOP2</name>
<sequence>MASRHISVSEQSRPMLPRHAKLRFDETRQRWVILAPERVLAPDDIAVEILQLCDGARSVAAIIDTLALKYTADRAEIGADVIAMLQDLADKGFLTEAREKTP</sequence>
<gene>
    <name evidence="1" type="primary">pqqD</name>
    <name type="ordered locus">RPB_3420</name>
</gene>
<protein>
    <recommendedName>
        <fullName evidence="1">PqqA binding protein</fullName>
    </recommendedName>
    <alternativeName>
        <fullName evidence="1">Coenzyme PQQ synthesis protein D</fullName>
    </alternativeName>
    <alternativeName>
        <fullName evidence="1">Pyrroloquinoline quinone biosynthesis protein D</fullName>
    </alternativeName>
</protein>
<accession>Q2IUJ4</accession>
<reference key="1">
    <citation type="submission" date="2006-01" db="EMBL/GenBank/DDBJ databases">
        <title>Complete sequence of Rhodopseudomonas palustris HaA2.</title>
        <authorList>
            <consortium name="US DOE Joint Genome Institute"/>
            <person name="Copeland A."/>
            <person name="Lucas S."/>
            <person name="Lapidus A."/>
            <person name="Barry K."/>
            <person name="Detter J.C."/>
            <person name="Glavina T."/>
            <person name="Hammon N."/>
            <person name="Israni S."/>
            <person name="Pitluck S."/>
            <person name="Chain P."/>
            <person name="Malfatti S."/>
            <person name="Shin M."/>
            <person name="Vergez L."/>
            <person name="Schmutz J."/>
            <person name="Larimer F."/>
            <person name="Land M."/>
            <person name="Hauser L."/>
            <person name="Pelletier D.A."/>
            <person name="Kyrpides N."/>
            <person name="Anderson I."/>
            <person name="Oda Y."/>
            <person name="Harwood C.S."/>
            <person name="Richardson P."/>
        </authorList>
    </citation>
    <scope>NUCLEOTIDE SEQUENCE [LARGE SCALE GENOMIC DNA]</scope>
    <source>
        <strain>HaA2</strain>
    </source>
</reference>
<evidence type="ECO:0000255" key="1">
    <source>
        <dbReference type="HAMAP-Rule" id="MF_00655"/>
    </source>
</evidence>
<dbReference type="EMBL" id="CP000250">
    <property type="protein sequence ID" value="ABD08116.1"/>
    <property type="molecule type" value="Genomic_DNA"/>
</dbReference>
<dbReference type="RefSeq" id="WP_011442300.1">
    <property type="nucleotide sequence ID" value="NC_007778.1"/>
</dbReference>
<dbReference type="SMR" id="Q2IUJ4"/>
<dbReference type="STRING" id="316058.RPB_3420"/>
<dbReference type="KEGG" id="rpb:RPB_3420"/>
<dbReference type="eggNOG" id="COG0535">
    <property type="taxonomic scope" value="Bacteria"/>
</dbReference>
<dbReference type="HOGENOM" id="CLU_163864_0_0_5"/>
<dbReference type="OrthoDB" id="7995890at2"/>
<dbReference type="UniPathway" id="UPA00539"/>
<dbReference type="Proteomes" id="UP000008809">
    <property type="component" value="Chromosome"/>
</dbReference>
<dbReference type="GO" id="GO:0048038">
    <property type="term" value="F:quinone binding"/>
    <property type="evidence" value="ECO:0007669"/>
    <property type="project" value="InterPro"/>
</dbReference>
<dbReference type="GO" id="GO:0018189">
    <property type="term" value="P:pyrroloquinoline quinone biosynthetic process"/>
    <property type="evidence" value="ECO:0007669"/>
    <property type="project" value="UniProtKB-UniRule"/>
</dbReference>
<dbReference type="Gene3D" id="1.10.10.1150">
    <property type="entry name" value="Coenzyme PQQ synthesis protein D (PqqD)"/>
    <property type="match status" value="1"/>
</dbReference>
<dbReference type="HAMAP" id="MF_00655">
    <property type="entry name" value="PQQ_syn_PqqD"/>
    <property type="match status" value="1"/>
</dbReference>
<dbReference type="InterPro" id="IPR008792">
    <property type="entry name" value="PQQD"/>
</dbReference>
<dbReference type="InterPro" id="IPR022479">
    <property type="entry name" value="PqqD_bac"/>
</dbReference>
<dbReference type="InterPro" id="IPR041881">
    <property type="entry name" value="PqqD_sf"/>
</dbReference>
<dbReference type="NCBIfam" id="TIGR03859">
    <property type="entry name" value="PQQ_PqqD"/>
    <property type="match status" value="1"/>
</dbReference>
<dbReference type="Pfam" id="PF05402">
    <property type="entry name" value="PqqD"/>
    <property type="match status" value="1"/>
</dbReference>